<gene>
    <name evidence="1" type="primary">ectC</name>
    <name type="ordered locus">Dole_0960</name>
</gene>
<name>ECTC_DESOH</name>
<sequence>MIVRDLQEILGTDREVTGEGWTSRRLLLKKDGMGFSFHETIIAAGTEHLFWYKNHLEAVYCVAGNGTIEDLATGQVHRIKNGVLYALNNHDRHVLRGGTEDMRLICAFNPPVTGRETHDSDGSYELVEE</sequence>
<proteinExistence type="inferred from homology"/>
<organism>
    <name type="scientific">Desulfosudis oleivorans (strain DSM 6200 / JCM 39069 / Hxd3)</name>
    <name type="common">Desulfococcus oleovorans</name>
    <dbReference type="NCBI Taxonomy" id="96561"/>
    <lineage>
        <taxon>Bacteria</taxon>
        <taxon>Pseudomonadati</taxon>
        <taxon>Thermodesulfobacteriota</taxon>
        <taxon>Desulfobacteria</taxon>
        <taxon>Desulfobacterales</taxon>
        <taxon>Desulfosudaceae</taxon>
        <taxon>Desulfosudis</taxon>
    </lineage>
</organism>
<keyword id="KW-0456">Lyase</keyword>
<keyword id="KW-1185">Reference proteome</keyword>
<accession>A8ZWG2</accession>
<evidence type="ECO:0000255" key="1">
    <source>
        <dbReference type="HAMAP-Rule" id="MF_01255"/>
    </source>
</evidence>
<dbReference type="EC" id="4.2.1.108" evidence="1"/>
<dbReference type="EMBL" id="CP000859">
    <property type="protein sequence ID" value="ABW66770.1"/>
    <property type="molecule type" value="Genomic_DNA"/>
</dbReference>
<dbReference type="RefSeq" id="WP_012174388.1">
    <property type="nucleotide sequence ID" value="NC_009943.1"/>
</dbReference>
<dbReference type="SMR" id="A8ZWG2"/>
<dbReference type="STRING" id="96561.Dole_0960"/>
<dbReference type="KEGG" id="dol:Dole_0960"/>
<dbReference type="eggNOG" id="COG1917">
    <property type="taxonomic scope" value="Bacteria"/>
</dbReference>
<dbReference type="HOGENOM" id="CLU_154525_0_0_7"/>
<dbReference type="OrthoDB" id="9801830at2"/>
<dbReference type="UniPathway" id="UPA00067">
    <property type="reaction ID" value="UER00123"/>
</dbReference>
<dbReference type="Proteomes" id="UP000008561">
    <property type="component" value="Chromosome"/>
</dbReference>
<dbReference type="GO" id="GO:0033990">
    <property type="term" value="F:ectoine synthase activity"/>
    <property type="evidence" value="ECO:0007669"/>
    <property type="project" value="UniProtKB-EC"/>
</dbReference>
<dbReference type="GO" id="GO:0019491">
    <property type="term" value="P:ectoine biosynthetic process"/>
    <property type="evidence" value="ECO:0007669"/>
    <property type="project" value="UniProtKB-UniRule"/>
</dbReference>
<dbReference type="CDD" id="cd06978">
    <property type="entry name" value="cupin_EctC"/>
    <property type="match status" value="1"/>
</dbReference>
<dbReference type="Gene3D" id="2.60.120.10">
    <property type="entry name" value="Jelly Rolls"/>
    <property type="match status" value="1"/>
</dbReference>
<dbReference type="HAMAP" id="MF_01255">
    <property type="entry name" value="Ectoine_synth"/>
    <property type="match status" value="1"/>
</dbReference>
<dbReference type="InterPro" id="IPR010462">
    <property type="entry name" value="Ectoine_synth"/>
</dbReference>
<dbReference type="InterPro" id="IPR014710">
    <property type="entry name" value="RmlC-like_jellyroll"/>
</dbReference>
<dbReference type="InterPro" id="IPR011051">
    <property type="entry name" value="RmlC_Cupin_sf"/>
</dbReference>
<dbReference type="NCBIfam" id="NF009806">
    <property type="entry name" value="PRK13290.1"/>
    <property type="match status" value="1"/>
</dbReference>
<dbReference type="PANTHER" id="PTHR39289">
    <property type="match status" value="1"/>
</dbReference>
<dbReference type="PANTHER" id="PTHR39289:SF1">
    <property type="entry name" value="L-ECTOINE SYNTHASE"/>
    <property type="match status" value="1"/>
</dbReference>
<dbReference type="Pfam" id="PF06339">
    <property type="entry name" value="Ectoine_synth"/>
    <property type="match status" value="1"/>
</dbReference>
<dbReference type="SUPFAM" id="SSF51182">
    <property type="entry name" value="RmlC-like cupins"/>
    <property type="match status" value="1"/>
</dbReference>
<feature type="chain" id="PRO_1000139969" description="L-ectoine synthase">
    <location>
        <begin position="1"/>
        <end position="129"/>
    </location>
</feature>
<reference key="1">
    <citation type="submission" date="2007-10" db="EMBL/GenBank/DDBJ databases">
        <title>Complete sequence of Desulfococcus oleovorans Hxd3.</title>
        <authorList>
            <consortium name="US DOE Joint Genome Institute"/>
            <person name="Copeland A."/>
            <person name="Lucas S."/>
            <person name="Lapidus A."/>
            <person name="Barry K."/>
            <person name="Glavina del Rio T."/>
            <person name="Dalin E."/>
            <person name="Tice H."/>
            <person name="Pitluck S."/>
            <person name="Kiss H."/>
            <person name="Brettin T."/>
            <person name="Bruce D."/>
            <person name="Detter J.C."/>
            <person name="Han C."/>
            <person name="Schmutz J."/>
            <person name="Larimer F."/>
            <person name="Land M."/>
            <person name="Hauser L."/>
            <person name="Kyrpides N."/>
            <person name="Kim E."/>
            <person name="Wawrik B."/>
            <person name="Richardson P."/>
        </authorList>
    </citation>
    <scope>NUCLEOTIDE SEQUENCE [LARGE SCALE GENOMIC DNA]</scope>
    <source>
        <strain>DSM 6200 / JCM 39069 / Hxd3</strain>
    </source>
</reference>
<comment type="function">
    <text evidence="1">Catalyzes the circularization of gamma-N-acetyl-alpha,gamma-diaminobutyric acid (ADABA) to ectoine (1,4,5,6-tetrahydro-2-methyl-4-pyrimidine carboxylic acid), which is an excellent osmoprotectant.</text>
</comment>
<comment type="catalytic activity">
    <reaction evidence="1">
        <text>(2S)-4-acetamido-2-aminobutanoate = L-ectoine + H2O</text>
        <dbReference type="Rhea" id="RHEA:17281"/>
        <dbReference type="ChEBI" id="CHEBI:15377"/>
        <dbReference type="ChEBI" id="CHEBI:58515"/>
        <dbReference type="ChEBI" id="CHEBI:58929"/>
        <dbReference type="EC" id="4.2.1.108"/>
    </reaction>
</comment>
<comment type="pathway">
    <text evidence="1">Amine and polyamine biosynthesis; ectoine biosynthesis; L-ectoine from L-aspartate 4-semialdehyde: step 3/3.</text>
</comment>
<comment type="similarity">
    <text evidence="1">Belongs to the ectoine synthase family.</text>
</comment>
<protein>
    <recommendedName>
        <fullName evidence="1">L-ectoine synthase</fullName>
        <ecNumber evidence="1">4.2.1.108</ecNumber>
    </recommendedName>
    <alternativeName>
        <fullName evidence="1">N-acetyldiaminobutyrate dehydratase</fullName>
    </alternativeName>
</protein>